<gene>
    <name evidence="1" type="primary">leuC</name>
    <name type="ordered locus">Mjls_1901</name>
</gene>
<name>LEUC_MYCSJ</name>
<protein>
    <recommendedName>
        <fullName evidence="1">3-isopropylmalate dehydratase large subunit</fullName>
        <ecNumber evidence="1">4.2.1.33</ecNumber>
    </recommendedName>
    <alternativeName>
        <fullName evidence="1">Alpha-IPM isomerase</fullName>
        <shortName evidence="1">IPMI</shortName>
    </alternativeName>
    <alternativeName>
        <fullName evidence="1">Isopropylmalate isomerase</fullName>
    </alternativeName>
</protein>
<proteinExistence type="inferred from homology"/>
<comment type="function">
    <text evidence="1">Catalyzes the isomerization between 2-isopropylmalate and 3-isopropylmalate, via the formation of 2-isopropylmaleate.</text>
</comment>
<comment type="catalytic activity">
    <reaction evidence="1">
        <text>(2R,3S)-3-isopropylmalate = (2S)-2-isopropylmalate</text>
        <dbReference type="Rhea" id="RHEA:32287"/>
        <dbReference type="ChEBI" id="CHEBI:1178"/>
        <dbReference type="ChEBI" id="CHEBI:35121"/>
        <dbReference type="EC" id="4.2.1.33"/>
    </reaction>
</comment>
<comment type="cofactor">
    <cofactor evidence="1">
        <name>[4Fe-4S] cluster</name>
        <dbReference type="ChEBI" id="CHEBI:49883"/>
    </cofactor>
    <text evidence="1">Binds 1 [4Fe-4S] cluster per subunit.</text>
</comment>
<comment type="pathway">
    <text evidence="1">Amino-acid biosynthesis; L-leucine biosynthesis; L-leucine from 3-methyl-2-oxobutanoate: step 2/4.</text>
</comment>
<comment type="subunit">
    <text evidence="1">Heterodimer of LeuC and LeuD.</text>
</comment>
<comment type="similarity">
    <text evidence="1">Belongs to the aconitase/IPM isomerase family. LeuC type 1 subfamily.</text>
</comment>
<evidence type="ECO:0000255" key="1">
    <source>
        <dbReference type="HAMAP-Rule" id="MF_01026"/>
    </source>
</evidence>
<evidence type="ECO:0000256" key="2">
    <source>
        <dbReference type="SAM" id="MobiDB-lite"/>
    </source>
</evidence>
<dbReference type="EC" id="4.2.1.33" evidence="1"/>
<dbReference type="EMBL" id="CP000580">
    <property type="protein sequence ID" value="ABN97689.1"/>
    <property type="molecule type" value="Genomic_DNA"/>
</dbReference>
<dbReference type="SMR" id="A3PXR2"/>
<dbReference type="KEGG" id="mjl:Mjls_1901"/>
<dbReference type="HOGENOM" id="CLU_006714_3_4_11"/>
<dbReference type="BioCyc" id="MSP164757:G1G8C-1920-MONOMER"/>
<dbReference type="UniPathway" id="UPA00048">
    <property type="reaction ID" value="UER00071"/>
</dbReference>
<dbReference type="GO" id="GO:0003861">
    <property type="term" value="F:3-isopropylmalate dehydratase activity"/>
    <property type="evidence" value="ECO:0007669"/>
    <property type="project" value="UniProtKB-UniRule"/>
</dbReference>
<dbReference type="GO" id="GO:0051539">
    <property type="term" value="F:4 iron, 4 sulfur cluster binding"/>
    <property type="evidence" value="ECO:0007669"/>
    <property type="project" value="UniProtKB-KW"/>
</dbReference>
<dbReference type="GO" id="GO:0046872">
    <property type="term" value="F:metal ion binding"/>
    <property type="evidence" value="ECO:0007669"/>
    <property type="project" value="UniProtKB-KW"/>
</dbReference>
<dbReference type="GO" id="GO:0009098">
    <property type="term" value="P:L-leucine biosynthetic process"/>
    <property type="evidence" value="ECO:0007669"/>
    <property type="project" value="UniProtKB-UniRule"/>
</dbReference>
<dbReference type="CDD" id="cd01583">
    <property type="entry name" value="IPMI"/>
    <property type="match status" value="1"/>
</dbReference>
<dbReference type="FunFam" id="3.30.499.10:FF:000007">
    <property type="entry name" value="3-isopropylmalate dehydratase large subunit"/>
    <property type="match status" value="1"/>
</dbReference>
<dbReference type="Gene3D" id="3.30.499.10">
    <property type="entry name" value="Aconitase, domain 3"/>
    <property type="match status" value="2"/>
</dbReference>
<dbReference type="HAMAP" id="MF_01026">
    <property type="entry name" value="LeuC_type1"/>
    <property type="match status" value="1"/>
</dbReference>
<dbReference type="InterPro" id="IPR004430">
    <property type="entry name" value="3-IsopropMal_deHydase_lsu"/>
</dbReference>
<dbReference type="InterPro" id="IPR015931">
    <property type="entry name" value="Acnase/IPM_dHydase_lsu_aba_1/3"/>
</dbReference>
<dbReference type="InterPro" id="IPR001030">
    <property type="entry name" value="Acoase/IPM_deHydtase_lsu_aba"/>
</dbReference>
<dbReference type="InterPro" id="IPR018136">
    <property type="entry name" value="Aconitase_4Fe-4S_BS"/>
</dbReference>
<dbReference type="InterPro" id="IPR036008">
    <property type="entry name" value="Aconitase_4Fe-4S_dom"/>
</dbReference>
<dbReference type="InterPro" id="IPR050067">
    <property type="entry name" value="IPM_dehydratase_rel_enz"/>
</dbReference>
<dbReference type="InterPro" id="IPR033941">
    <property type="entry name" value="IPMI_cat"/>
</dbReference>
<dbReference type="NCBIfam" id="TIGR00170">
    <property type="entry name" value="leuC"/>
    <property type="match status" value="1"/>
</dbReference>
<dbReference type="NCBIfam" id="NF004016">
    <property type="entry name" value="PRK05478.1"/>
    <property type="match status" value="1"/>
</dbReference>
<dbReference type="NCBIfam" id="NF009116">
    <property type="entry name" value="PRK12466.1"/>
    <property type="match status" value="1"/>
</dbReference>
<dbReference type="PANTHER" id="PTHR43822:SF9">
    <property type="entry name" value="3-ISOPROPYLMALATE DEHYDRATASE"/>
    <property type="match status" value="1"/>
</dbReference>
<dbReference type="PANTHER" id="PTHR43822">
    <property type="entry name" value="HOMOACONITASE, MITOCHONDRIAL-RELATED"/>
    <property type="match status" value="1"/>
</dbReference>
<dbReference type="Pfam" id="PF00330">
    <property type="entry name" value="Aconitase"/>
    <property type="match status" value="1"/>
</dbReference>
<dbReference type="PRINTS" id="PR00415">
    <property type="entry name" value="ACONITASE"/>
</dbReference>
<dbReference type="SUPFAM" id="SSF53732">
    <property type="entry name" value="Aconitase iron-sulfur domain"/>
    <property type="match status" value="1"/>
</dbReference>
<dbReference type="PROSITE" id="PS00450">
    <property type="entry name" value="ACONITASE_1"/>
    <property type="match status" value="1"/>
</dbReference>
<dbReference type="PROSITE" id="PS01244">
    <property type="entry name" value="ACONITASE_2"/>
    <property type="match status" value="1"/>
</dbReference>
<sequence length="481" mass="51004">MAQPATPRTMAEKVWADHVVAHGTGEGAAREPDLIYIDLHLVHEVTSPQAFDGLRLANRPVRRPDLTIATEDHNVPTVDIDKPIADPVSRTQVETLRRNCAEFGIRLHPMGDAEQGIVHIIGPQLGLTQPGMTVVCGDSHTSTHGAFGALAMGIGTSEVEHVLATQTLPLRPFRTMAVNVDGELPPGVSAKDIILAVIAKIGTGGGQGHVIEYRGSAIESLSMEGRMTICNMSIEAGARAGMVAPDDTTFEFLRGRPHAPTGADWDAAVEAWRQLRTDPGAEFDTEVHLDAAELSPFVTWGTNPGQGVPLSGAVPDPELIVDEGERQAAEKALTYMGLQAGTAMRDVAVDTVFVGSCTNGRIEDLRVVADVLRGRRVADGIRMLVVPGSMRVRAQAESEGLDRIFIDAGAEWRQAGCSMCLGMNPDQLSPGQRCASTSNRNFEGRQGKGGRTHLVSPAVAAATAVRGTLSSPADLSAVPAR</sequence>
<keyword id="KW-0004">4Fe-4S</keyword>
<keyword id="KW-0028">Amino-acid biosynthesis</keyword>
<keyword id="KW-0100">Branched-chain amino acid biosynthesis</keyword>
<keyword id="KW-0408">Iron</keyword>
<keyword id="KW-0411">Iron-sulfur</keyword>
<keyword id="KW-0432">Leucine biosynthesis</keyword>
<keyword id="KW-0456">Lyase</keyword>
<keyword id="KW-0479">Metal-binding</keyword>
<reference key="1">
    <citation type="submission" date="2007-02" db="EMBL/GenBank/DDBJ databases">
        <title>Complete sequence of Mycobacterium sp. JLS.</title>
        <authorList>
            <consortium name="US DOE Joint Genome Institute"/>
            <person name="Copeland A."/>
            <person name="Lucas S."/>
            <person name="Lapidus A."/>
            <person name="Barry K."/>
            <person name="Detter J.C."/>
            <person name="Glavina del Rio T."/>
            <person name="Hammon N."/>
            <person name="Israni S."/>
            <person name="Dalin E."/>
            <person name="Tice H."/>
            <person name="Pitluck S."/>
            <person name="Chain P."/>
            <person name="Malfatti S."/>
            <person name="Shin M."/>
            <person name="Vergez L."/>
            <person name="Schmutz J."/>
            <person name="Larimer F."/>
            <person name="Land M."/>
            <person name="Hauser L."/>
            <person name="Kyrpides N."/>
            <person name="Mikhailova N."/>
            <person name="Miller C.D."/>
            <person name="Anderson A.J."/>
            <person name="Sims R.C."/>
            <person name="Richardson P."/>
        </authorList>
    </citation>
    <scope>NUCLEOTIDE SEQUENCE [LARGE SCALE GENOMIC DNA]</scope>
    <source>
        <strain>JLS</strain>
    </source>
</reference>
<organism>
    <name type="scientific">Mycobacterium sp. (strain JLS)</name>
    <dbReference type="NCBI Taxonomy" id="164757"/>
    <lineage>
        <taxon>Bacteria</taxon>
        <taxon>Bacillati</taxon>
        <taxon>Actinomycetota</taxon>
        <taxon>Actinomycetes</taxon>
        <taxon>Mycobacteriales</taxon>
        <taxon>Mycobacteriaceae</taxon>
        <taxon>Mycobacterium</taxon>
    </lineage>
</organism>
<feature type="chain" id="PRO_0000319819" description="3-isopropylmalate dehydratase large subunit">
    <location>
        <begin position="1"/>
        <end position="481"/>
    </location>
</feature>
<feature type="region of interest" description="Disordered" evidence="2">
    <location>
        <begin position="429"/>
        <end position="451"/>
    </location>
</feature>
<feature type="compositionally biased region" description="Polar residues" evidence="2">
    <location>
        <begin position="429"/>
        <end position="441"/>
    </location>
</feature>
<feature type="binding site" evidence="1">
    <location>
        <position position="357"/>
    </location>
    <ligand>
        <name>[4Fe-4S] cluster</name>
        <dbReference type="ChEBI" id="CHEBI:49883"/>
    </ligand>
</feature>
<feature type="binding site" evidence="1">
    <location>
        <position position="417"/>
    </location>
    <ligand>
        <name>[4Fe-4S] cluster</name>
        <dbReference type="ChEBI" id="CHEBI:49883"/>
    </ligand>
</feature>
<feature type="binding site" evidence="1">
    <location>
        <position position="420"/>
    </location>
    <ligand>
        <name>[4Fe-4S] cluster</name>
        <dbReference type="ChEBI" id="CHEBI:49883"/>
    </ligand>
</feature>
<accession>A3PXR2</accession>